<protein>
    <recommendedName>
        <fullName evidence="3">TLC domain-containing protein 5</fullName>
    </recommendedName>
    <alternativeName>
        <fullName>Transmembrane protein 136</fullName>
    </alternativeName>
</protein>
<proteinExistence type="evidence at transcript level"/>
<comment type="subcellular location">
    <subcellularLocation>
        <location evidence="3">Membrane</location>
        <topology evidence="3">Multi-pass membrane protein</topology>
    </subcellularLocation>
</comment>
<comment type="similarity">
    <text evidence="3">Belongs to the TLCD5 family.</text>
</comment>
<organism>
    <name type="scientific">Danio rerio</name>
    <name type="common">Zebrafish</name>
    <name type="synonym">Brachydanio rerio</name>
    <dbReference type="NCBI Taxonomy" id="7955"/>
    <lineage>
        <taxon>Eukaryota</taxon>
        <taxon>Metazoa</taxon>
        <taxon>Chordata</taxon>
        <taxon>Craniata</taxon>
        <taxon>Vertebrata</taxon>
        <taxon>Euteleostomi</taxon>
        <taxon>Actinopterygii</taxon>
        <taxon>Neopterygii</taxon>
        <taxon>Teleostei</taxon>
        <taxon>Ostariophysi</taxon>
        <taxon>Cypriniformes</taxon>
        <taxon>Danionidae</taxon>
        <taxon>Danioninae</taxon>
        <taxon>Danio</taxon>
    </lineage>
</organism>
<evidence type="ECO:0000255" key="1"/>
<evidence type="ECO:0000255" key="2">
    <source>
        <dbReference type="PROSITE-ProRule" id="PRU00205"/>
    </source>
</evidence>
<evidence type="ECO:0000305" key="3"/>
<dbReference type="EMBL" id="BX248506">
    <property type="protein sequence ID" value="CAK11151.1"/>
    <property type="molecule type" value="Genomic_DNA"/>
</dbReference>
<dbReference type="EMBL" id="BC076110">
    <property type="protein sequence ID" value="AAH76110.1"/>
    <property type="molecule type" value="mRNA"/>
</dbReference>
<dbReference type="RefSeq" id="NP_001002701.1">
    <property type="nucleotide sequence ID" value="NM_001002701.1"/>
</dbReference>
<dbReference type="FunCoup" id="Q1LXV8">
    <property type="interactions" value="65"/>
</dbReference>
<dbReference type="STRING" id="7955.ENSDARP00000050931"/>
<dbReference type="PaxDb" id="7955-ENSDARP00000050931"/>
<dbReference type="Ensembl" id="ENSDART00000050932">
    <property type="protein sequence ID" value="ENSDARP00000050931"/>
    <property type="gene ID" value="ENSDARG00000035163"/>
</dbReference>
<dbReference type="GeneID" id="436974"/>
<dbReference type="KEGG" id="dre:436974"/>
<dbReference type="AGR" id="ZFIN:ZDB-GENE-040718-455"/>
<dbReference type="CTD" id="436974"/>
<dbReference type="ZFIN" id="ZDB-GENE-040718-455">
    <property type="gene designation" value="tlcd5b"/>
</dbReference>
<dbReference type="eggNOG" id="KOG4474">
    <property type="taxonomic scope" value="Eukaryota"/>
</dbReference>
<dbReference type="HOGENOM" id="CLU_083447_0_0_1"/>
<dbReference type="InParanoid" id="Q1LXV8"/>
<dbReference type="OMA" id="SERDCEW"/>
<dbReference type="OrthoDB" id="506011at2759"/>
<dbReference type="PhylomeDB" id="Q1LXV8"/>
<dbReference type="TreeFam" id="TF329126"/>
<dbReference type="PRO" id="PR:Q1LXV8"/>
<dbReference type="Proteomes" id="UP000000437">
    <property type="component" value="Alternate scaffold 5"/>
</dbReference>
<dbReference type="Proteomes" id="UP000000437">
    <property type="component" value="Chromosome 5"/>
</dbReference>
<dbReference type="Bgee" id="ENSDARG00000035163">
    <property type="expression patterns" value="Expressed in retina and 3 other cell types or tissues"/>
</dbReference>
<dbReference type="GO" id="GO:0016020">
    <property type="term" value="C:membrane"/>
    <property type="evidence" value="ECO:0007669"/>
    <property type="project" value="UniProtKB-SubCell"/>
</dbReference>
<dbReference type="InterPro" id="IPR006634">
    <property type="entry name" value="TLC-dom"/>
</dbReference>
<dbReference type="InterPro" id="IPR042512">
    <property type="entry name" value="TLCD5"/>
</dbReference>
<dbReference type="PANTHER" id="PTHR31898:SF7">
    <property type="entry name" value="TLC DOMAIN-CONTAINING PROTEIN 5"/>
    <property type="match status" value="1"/>
</dbReference>
<dbReference type="PANTHER" id="PTHR31898">
    <property type="entry name" value="TRANSMEMBRANE PROTEIN 136"/>
    <property type="match status" value="1"/>
</dbReference>
<dbReference type="Pfam" id="PF03798">
    <property type="entry name" value="TRAM_LAG1_CLN8"/>
    <property type="match status" value="1"/>
</dbReference>
<dbReference type="SMART" id="SM00724">
    <property type="entry name" value="TLC"/>
    <property type="match status" value="1"/>
</dbReference>
<dbReference type="PROSITE" id="PS50922">
    <property type="entry name" value="TLC"/>
    <property type="match status" value="1"/>
</dbReference>
<reference key="1">
    <citation type="journal article" date="2013" name="Nature">
        <title>The zebrafish reference genome sequence and its relationship to the human genome.</title>
        <authorList>
            <person name="Howe K."/>
            <person name="Clark M.D."/>
            <person name="Torroja C.F."/>
            <person name="Torrance J."/>
            <person name="Berthelot C."/>
            <person name="Muffato M."/>
            <person name="Collins J.E."/>
            <person name="Humphray S."/>
            <person name="McLaren K."/>
            <person name="Matthews L."/>
            <person name="McLaren S."/>
            <person name="Sealy I."/>
            <person name="Caccamo M."/>
            <person name="Churcher C."/>
            <person name="Scott C."/>
            <person name="Barrett J.C."/>
            <person name="Koch R."/>
            <person name="Rauch G.J."/>
            <person name="White S."/>
            <person name="Chow W."/>
            <person name="Kilian B."/>
            <person name="Quintais L.T."/>
            <person name="Guerra-Assuncao J.A."/>
            <person name="Zhou Y."/>
            <person name="Gu Y."/>
            <person name="Yen J."/>
            <person name="Vogel J.H."/>
            <person name="Eyre T."/>
            <person name="Redmond S."/>
            <person name="Banerjee R."/>
            <person name="Chi J."/>
            <person name="Fu B."/>
            <person name="Langley E."/>
            <person name="Maguire S.F."/>
            <person name="Laird G.K."/>
            <person name="Lloyd D."/>
            <person name="Kenyon E."/>
            <person name="Donaldson S."/>
            <person name="Sehra H."/>
            <person name="Almeida-King J."/>
            <person name="Loveland J."/>
            <person name="Trevanion S."/>
            <person name="Jones M."/>
            <person name="Quail M."/>
            <person name="Willey D."/>
            <person name="Hunt A."/>
            <person name="Burton J."/>
            <person name="Sims S."/>
            <person name="McLay K."/>
            <person name="Plumb B."/>
            <person name="Davis J."/>
            <person name="Clee C."/>
            <person name="Oliver K."/>
            <person name="Clark R."/>
            <person name="Riddle C."/>
            <person name="Elliot D."/>
            <person name="Threadgold G."/>
            <person name="Harden G."/>
            <person name="Ware D."/>
            <person name="Begum S."/>
            <person name="Mortimore B."/>
            <person name="Kerry G."/>
            <person name="Heath P."/>
            <person name="Phillimore B."/>
            <person name="Tracey A."/>
            <person name="Corby N."/>
            <person name="Dunn M."/>
            <person name="Johnson C."/>
            <person name="Wood J."/>
            <person name="Clark S."/>
            <person name="Pelan S."/>
            <person name="Griffiths G."/>
            <person name="Smith M."/>
            <person name="Glithero R."/>
            <person name="Howden P."/>
            <person name="Barker N."/>
            <person name="Lloyd C."/>
            <person name="Stevens C."/>
            <person name="Harley J."/>
            <person name="Holt K."/>
            <person name="Panagiotidis G."/>
            <person name="Lovell J."/>
            <person name="Beasley H."/>
            <person name="Henderson C."/>
            <person name="Gordon D."/>
            <person name="Auger K."/>
            <person name="Wright D."/>
            <person name="Collins J."/>
            <person name="Raisen C."/>
            <person name="Dyer L."/>
            <person name="Leung K."/>
            <person name="Robertson L."/>
            <person name="Ambridge K."/>
            <person name="Leongamornlert D."/>
            <person name="McGuire S."/>
            <person name="Gilderthorp R."/>
            <person name="Griffiths C."/>
            <person name="Manthravadi D."/>
            <person name="Nichol S."/>
            <person name="Barker G."/>
            <person name="Whitehead S."/>
            <person name="Kay M."/>
            <person name="Brown J."/>
            <person name="Murnane C."/>
            <person name="Gray E."/>
            <person name="Humphries M."/>
            <person name="Sycamore N."/>
            <person name="Barker D."/>
            <person name="Saunders D."/>
            <person name="Wallis J."/>
            <person name="Babbage A."/>
            <person name="Hammond S."/>
            <person name="Mashreghi-Mohammadi M."/>
            <person name="Barr L."/>
            <person name="Martin S."/>
            <person name="Wray P."/>
            <person name="Ellington A."/>
            <person name="Matthews N."/>
            <person name="Ellwood M."/>
            <person name="Woodmansey R."/>
            <person name="Clark G."/>
            <person name="Cooper J."/>
            <person name="Tromans A."/>
            <person name="Grafham D."/>
            <person name="Skuce C."/>
            <person name="Pandian R."/>
            <person name="Andrews R."/>
            <person name="Harrison E."/>
            <person name="Kimberley A."/>
            <person name="Garnett J."/>
            <person name="Fosker N."/>
            <person name="Hall R."/>
            <person name="Garner P."/>
            <person name="Kelly D."/>
            <person name="Bird C."/>
            <person name="Palmer S."/>
            <person name="Gehring I."/>
            <person name="Berger A."/>
            <person name="Dooley C.M."/>
            <person name="Ersan-Urun Z."/>
            <person name="Eser C."/>
            <person name="Geiger H."/>
            <person name="Geisler M."/>
            <person name="Karotki L."/>
            <person name="Kirn A."/>
            <person name="Konantz J."/>
            <person name="Konantz M."/>
            <person name="Oberlander M."/>
            <person name="Rudolph-Geiger S."/>
            <person name="Teucke M."/>
            <person name="Lanz C."/>
            <person name="Raddatz G."/>
            <person name="Osoegawa K."/>
            <person name="Zhu B."/>
            <person name="Rapp A."/>
            <person name="Widaa S."/>
            <person name="Langford C."/>
            <person name="Yang F."/>
            <person name="Schuster S.C."/>
            <person name="Carter N.P."/>
            <person name="Harrow J."/>
            <person name="Ning Z."/>
            <person name="Herrero J."/>
            <person name="Searle S.M."/>
            <person name="Enright A."/>
            <person name="Geisler R."/>
            <person name="Plasterk R.H."/>
            <person name="Lee C."/>
            <person name="Westerfield M."/>
            <person name="de Jong P.J."/>
            <person name="Zon L.I."/>
            <person name="Postlethwait J.H."/>
            <person name="Nusslein-Volhard C."/>
            <person name="Hubbard T.J."/>
            <person name="Roest Crollius H."/>
            <person name="Rogers J."/>
            <person name="Stemple D.L."/>
        </authorList>
    </citation>
    <scope>NUCLEOTIDE SEQUENCE [LARGE SCALE GENOMIC DNA]</scope>
    <source>
        <strain>Tuebingen</strain>
    </source>
</reference>
<reference key="2">
    <citation type="submission" date="2004-07" db="EMBL/GenBank/DDBJ databases">
        <authorList>
            <consortium name="NIH - Zebrafish Gene Collection (ZGC) project"/>
        </authorList>
    </citation>
    <scope>NUCLEOTIDE SEQUENCE [LARGE SCALE MRNA]</scope>
    <source>
        <tissue>Brain</tissue>
    </source>
</reference>
<name>TLCD5_DANRE</name>
<sequence length="242" mass="27305">MPLFIVETSCSLISWLFLYLLLCHLNSGRDSEWNCRLVTLFHGILIICLTAYIGFIAGPWPFTHPGTENTYFQILTLVLSLGYFLFDMAWCVYFRTEGPVMLAHHTMSIFGILLALGLGESGIETCAVLFGSEITNPLLQARWFLKRMGCYDSLAGDVVDLLFILLFASVRIGVGSRMLYCELTSPKPSLIVKVGGVAIYTLSWIFMVDIARFACRKTCGKYRRWKEQYKLDGVNGHAVKIK</sequence>
<feature type="chain" id="PRO_0000285585" description="TLC domain-containing protein 5">
    <location>
        <begin position="1"/>
        <end position="242"/>
    </location>
</feature>
<feature type="transmembrane region" description="Helical" evidence="1">
    <location>
        <begin position="3"/>
        <end position="23"/>
    </location>
</feature>
<feature type="transmembrane region" description="Helical" evidence="1">
    <location>
        <begin position="37"/>
        <end position="57"/>
    </location>
</feature>
<feature type="transmembrane region" description="Helical" evidence="1">
    <location>
        <begin position="74"/>
        <end position="94"/>
    </location>
</feature>
<feature type="transmembrane region" description="Helical" evidence="1">
    <location>
        <begin position="109"/>
        <end position="129"/>
    </location>
</feature>
<feature type="transmembrane region" description="Helical" evidence="1">
    <location>
        <begin position="154"/>
        <end position="174"/>
    </location>
</feature>
<feature type="transmembrane region" description="Helical" evidence="1">
    <location>
        <begin position="190"/>
        <end position="210"/>
    </location>
</feature>
<feature type="domain" description="TLC" evidence="2">
    <location>
        <begin position="28"/>
        <end position="219"/>
    </location>
</feature>
<feature type="sequence conflict" description="In Ref. 2; AAH76110." evidence="3" ref="2">
    <original>Q</original>
    <variation>R</variation>
    <location>
        <position position="228"/>
    </location>
</feature>
<keyword id="KW-0472">Membrane</keyword>
<keyword id="KW-1185">Reference proteome</keyword>
<keyword id="KW-0812">Transmembrane</keyword>
<keyword id="KW-1133">Transmembrane helix</keyword>
<gene>
    <name type="primary">tlcd5</name>
    <name type="synonym">tmem136</name>
    <name type="ORF">si:dkey-70k11.2</name>
    <name type="ORF">zgc:92621</name>
</gene>
<accession>Q1LXV8</accession>
<accession>Q6DH71</accession>